<organism>
    <name type="scientific">Lactococcus lactis subsp. lactis (strain IL1403)</name>
    <name type="common">Streptococcus lactis</name>
    <dbReference type="NCBI Taxonomy" id="272623"/>
    <lineage>
        <taxon>Bacteria</taxon>
        <taxon>Bacillati</taxon>
        <taxon>Bacillota</taxon>
        <taxon>Bacilli</taxon>
        <taxon>Lactobacillales</taxon>
        <taxon>Streptococcaceae</taxon>
        <taxon>Lactococcus</taxon>
    </lineage>
</organism>
<dbReference type="EMBL" id="AE005176">
    <property type="protein sequence ID" value="AAK05050.1"/>
    <property type="molecule type" value="Genomic_DNA"/>
</dbReference>
<dbReference type="PIR" id="H86743">
    <property type="entry name" value="H86743"/>
</dbReference>
<dbReference type="RefSeq" id="NP_267108.1">
    <property type="nucleotide sequence ID" value="NC_002662.1"/>
</dbReference>
<dbReference type="RefSeq" id="WP_010905650.1">
    <property type="nucleotide sequence ID" value="NC_002662.1"/>
</dbReference>
<dbReference type="SMR" id="Q9CGZ0"/>
<dbReference type="PaxDb" id="272623-L0212"/>
<dbReference type="EnsemblBacteria" id="AAK05050">
    <property type="protein sequence ID" value="AAK05050"/>
    <property type="gene ID" value="L0212"/>
</dbReference>
<dbReference type="GeneID" id="89633138"/>
<dbReference type="KEGG" id="lla:L0212"/>
<dbReference type="PATRIC" id="fig|272623.7.peg.1019"/>
<dbReference type="eggNOG" id="COG1420">
    <property type="taxonomic scope" value="Bacteria"/>
</dbReference>
<dbReference type="HOGENOM" id="CLU_050019_1_0_9"/>
<dbReference type="OrthoDB" id="9783139at2"/>
<dbReference type="Proteomes" id="UP000002196">
    <property type="component" value="Chromosome"/>
</dbReference>
<dbReference type="GO" id="GO:0003677">
    <property type="term" value="F:DNA binding"/>
    <property type="evidence" value="ECO:0007669"/>
    <property type="project" value="InterPro"/>
</dbReference>
<dbReference type="GO" id="GO:0045892">
    <property type="term" value="P:negative regulation of DNA-templated transcription"/>
    <property type="evidence" value="ECO:0007669"/>
    <property type="project" value="UniProtKB-UniRule"/>
</dbReference>
<dbReference type="Gene3D" id="3.30.450.40">
    <property type="match status" value="1"/>
</dbReference>
<dbReference type="Gene3D" id="3.30.390.60">
    <property type="entry name" value="Heat-inducible transcription repressor hrca homolog, domain 3"/>
    <property type="match status" value="1"/>
</dbReference>
<dbReference type="Gene3D" id="1.10.10.10">
    <property type="entry name" value="Winged helix-like DNA-binding domain superfamily/Winged helix DNA-binding domain"/>
    <property type="match status" value="1"/>
</dbReference>
<dbReference type="HAMAP" id="MF_00081">
    <property type="entry name" value="HrcA"/>
    <property type="match status" value="1"/>
</dbReference>
<dbReference type="InterPro" id="IPR029016">
    <property type="entry name" value="GAF-like_dom_sf"/>
</dbReference>
<dbReference type="InterPro" id="IPR002571">
    <property type="entry name" value="HrcA"/>
</dbReference>
<dbReference type="InterPro" id="IPR021153">
    <property type="entry name" value="HrcA_C"/>
</dbReference>
<dbReference type="InterPro" id="IPR036388">
    <property type="entry name" value="WH-like_DNA-bd_sf"/>
</dbReference>
<dbReference type="InterPro" id="IPR036390">
    <property type="entry name" value="WH_DNA-bd_sf"/>
</dbReference>
<dbReference type="InterPro" id="IPR005104">
    <property type="entry name" value="WHTH_HrcA_DNA-bd"/>
</dbReference>
<dbReference type="InterPro" id="IPR023120">
    <property type="entry name" value="WHTH_transcript_rep_HrcA_IDD"/>
</dbReference>
<dbReference type="NCBIfam" id="TIGR00331">
    <property type="entry name" value="hrcA"/>
    <property type="match status" value="1"/>
</dbReference>
<dbReference type="PANTHER" id="PTHR34824">
    <property type="entry name" value="HEAT-INDUCIBLE TRANSCRIPTION REPRESSOR HRCA"/>
    <property type="match status" value="1"/>
</dbReference>
<dbReference type="PANTHER" id="PTHR34824:SF1">
    <property type="entry name" value="HEAT-INDUCIBLE TRANSCRIPTION REPRESSOR HRCA"/>
    <property type="match status" value="1"/>
</dbReference>
<dbReference type="Pfam" id="PF01628">
    <property type="entry name" value="HrcA"/>
    <property type="match status" value="1"/>
</dbReference>
<dbReference type="Pfam" id="PF03444">
    <property type="entry name" value="HrcA_DNA-bdg"/>
    <property type="match status" value="1"/>
</dbReference>
<dbReference type="PIRSF" id="PIRSF005485">
    <property type="entry name" value="HrcA"/>
    <property type="match status" value="1"/>
</dbReference>
<dbReference type="SUPFAM" id="SSF55781">
    <property type="entry name" value="GAF domain-like"/>
    <property type="match status" value="1"/>
</dbReference>
<dbReference type="SUPFAM" id="SSF46785">
    <property type="entry name" value="Winged helix' DNA-binding domain"/>
    <property type="match status" value="1"/>
</dbReference>
<comment type="function">
    <text evidence="1">Negative regulator of class I heat shock genes (grpE-dnaK-dnaJ and groELS operons). Prevents heat-shock induction of these operons.</text>
</comment>
<comment type="similarity">
    <text evidence="1">Belongs to the HrcA family.</text>
</comment>
<protein>
    <recommendedName>
        <fullName evidence="1">Heat-inducible transcription repressor HrcA</fullName>
    </recommendedName>
</protein>
<evidence type="ECO:0000255" key="1">
    <source>
        <dbReference type="HAMAP-Rule" id="MF_00081"/>
    </source>
</evidence>
<keyword id="KW-1185">Reference proteome</keyword>
<keyword id="KW-0678">Repressor</keyword>
<keyword id="KW-0346">Stress response</keyword>
<keyword id="KW-0804">Transcription</keyword>
<keyword id="KW-0805">Transcription regulation</keyword>
<accession>Q9CGZ0</accession>
<feature type="chain" id="PRO_0000182487" description="Heat-inducible transcription repressor HrcA">
    <location>
        <begin position="1"/>
        <end position="347"/>
    </location>
</feature>
<sequence>MITERQRQILNLIVSLYAKEHTPIGSKSLLDSIQASSATIRNDMKVLEKLGLIQKEHTSSGRVPSVSGYKYFVENVIQLDEFSQNDLFKVMKAFDGDFYRLSDLFKTAAKSLSGLTGLTSFVLNAPQRDQQLVSFEMVMLDSHSVLSVITLGTGEVRTNQFILPKSMTEADLAVFSNLVKERLVGKKVIDIHYTLRTEIPQIVQRYFKVTSEVLQLFESIFDDLFKERLTVAGRKNIFDYATDNLAELYKLFSDDERMLHEIREITNNDEMRAVKFDNDEKYMKNLTIISQKFVIPYRGFGTLTVVGPVEMDYQRTLSVLDLVAKVLTMKLSDYYRYLDGNHYEISK</sequence>
<proteinExistence type="inferred from homology"/>
<gene>
    <name evidence="1" type="primary">hrcA</name>
    <name type="ordered locus">LL0952</name>
    <name type="ORF">L0212</name>
</gene>
<name>HRCA_LACLA</name>
<reference key="1">
    <citation type="journal article" date="2001" name="Genome Res.">
        <title>The complete genome sequence of the lactic acid bacterium Lactococcus lactis ssp. lactis IL1403.</title>
        <authorList>
            <person name="Bolotin A."/>
            <person name="Wincker P."/>
            <person name="Mauger S."/>
            <person name="Jaillon O."/>
            <person name="Malarme K."/>
            <person name="Weissenbach J."/>
            <person name="Ehrlich S.D."/>
            <person name="Sorokin A."/>
        </authorList>
    </citation>
    <scope>NUCLEOTIDE SEQUENCE [LARGE SCALE GENOMIC DNA]</scope>
    <source>
        <strain>IL1403</strain>
    </source>
</reference>